<sequence length="391" mass="43632">MESETEPEPVTLLVKSPNQRHRDLELSGDRGWSVGHLKAHLSRVYPERPRPEDQRLIYSGKLLLDHQCLRDLLPKQEKRHVLHLVCNVKSPSKMPEINAKVAESTEEPAGSNRGQYPEDSSSDGLRQREVLRNLSSPGWENISRPEAAQQAFQGLGPGFSGYTPYGWLQLSWFQQIYARQYYMQYLAATAASGAFVPPPSAQEIPVVSAPAPAPIHNQFPAENQPANQNAAPQVVVNPGANQNLRMNAQGGPIVEEDDEINRDWLDWTYSAATFSVFLSILYFYSSLSRFLMVMGATVVMYLHHVGWFPFRPRPVQNFPNDGPPPDIVNQDPNNNLQEGTDPETEDPNHVPPDRGVLDGEQTGPSFMSTAWLVFKTFFASLLPEGPPAIAN</sequence>
<keyword id="KW-0007">Acetylation</keyword>
<keyword id="KW-0256">Endoplasmic reticulum</keyword>
<keyword id="KW-0472">Membrane</keyword>
<keyword id="KW-0597">Phosphoprotein</keyword>
<keyword id="KW-1185">Reference proteome</keyword>
<keyword id="KW-0812">Transmembrane</keyword>
<keyword id="KW-1133">Transmembrane helix</keyword>
<keyword id="KW-0834">Unfolded protein response</keyword>
<organism>
    <name type="scientific">Pongo abelii</name>
    <name type="common">Sumatran orangutan</name>
    <name type="synonym">Pongo pygmaeus abelii</name>
    <dbReference type="NCBI Taxonomy" id="9601"/>
    <lineage>
        <taxon>Eukaryota</taxon>
        <taxon>Metazoa</taxon>
        <taxon>Chordata</taxon>
        <taxon>Craniata</taxon>
        <taxon>Vertebrata</taxon>
        <taxon>Euteleostomi</taxon>
        <taxon>Mammalia</taxon>
        <taxon>Eutheria</taxon>
        <taxon>Euarchontoglires</taxon>
        <taxon>Primates</taxon>
        <taxon>Haplorrhini</taxon>
        <taxon>Catarrhini</taxon>
        <taxon>Hominidae</taxon>
        <taxon>Pongo</taxon>
    </lineage>
</organism>
<protein>
    <recommendedName>
        <fullName>Homocysteine-responsive endoplasmic reticulum-resident ubiquitin-like domain member 1 protein</fullName>
    </recommendedName>
</protein>
<comment type="function">
    <text evidence="2">Component of the endoplasmic reticulum quality control (ERQC) system also called ER-associated degradation (ERAD) involved in ubiquitin-dependent degradation of misfolded endoplasmic reticulum proteins. Binds to ubiquilins and this interaction is required for efficient degradation of CD3D via the ERAD pathway.</text>
</comment>
<comment type="subunit">
    <text evidence="2">Interacts with PSEN1 and PSEN2 (By similarity). Interacts with UBXN6 (By similarity). Interacts with UBQLN1, UBQLN2 and UBQLN4 (By similarity). Component of the HRD1 complex, which comprises at least SYNV1/HRD1, FAM8A1, HERPUD1/HERP, OS9, SEL1L and UBE2J1. FAM8A1 binding to SYNV1 may promote recruitment of HERPUD1 to the HRD1 complex (By similarity).</text>
</comment>
<comment type="subcellular location">
    <subcellularLocation>
        <location evidence="1">Endoplasmic reticulum membrane</location>
        <topology evidence="1">Multi-pass membrane protein</topology>
    </subcellularLocation>
</comment>
<name>HERP1_PONAB</name>
<feature type="chain" id="PRO_0000280633" description="Homocysteine-responsive endoplasmic reticulum-resident ubiquitin-like domain member 1 protein">
    <location>
        <begin position="1"/>
        <end position="391"/>
    </location>
</feature>
<feature type="topological domain" description="Cytoplasmic" evidence="3">
    <location>
        <begin position="1"/>
        <end position="263"/>
    </location>
</feature>
<feature type="transmembrane region" description="Helical" evidence="3">
    <location>
        <begin position="264"/>
        <end position="284"/>
    </location>
</feature>
<feature type="topological domain" description="Lumenal" evidence="3">
    <location>
        <begin position="285"/>
        <end position="289"/>
    </location>
</feature>
<feature type="transmembrane region" description="Helical" evidence="3">
    <location>
        <begin position="290"/>
        <end position="310"/>
    </location>
</feature>
<feature type="topological domain" description="Cytoplasmic" evidence="3">
    <location>
        <begin position="311"/>
        <end position="391"/>
    </location>
</feature>
<feature type="domain" description="Ubiquitin-like" evidence="4">
    <location>
        <begin position="10"/>
        <end position="72"/>
    </location>
</feature>
<feature type="region of interest" description="Disordered" evidence="5">
    <location>
        <begin position="100"/>
        <end position="126"/>
    </location>
</feature>
<feature type="region of interest" description="Interaction with UBQLN1" evidence="2">
    <location>
        <begin position="115"/>
        <end position="200"/>
    </location>
</feature>
<feature type="region of interest" description="Disordered" evidence="5">
    <location>
        <begin position="318"/>
        <end position="359"/>
    </location>
</feature>
<feature type="compositionally biased region" description="Polar residues" evidence="5">
    <location>
        <begin position="112"/>
        <end position="124"/>
    </location>
</feature>
<feature type="compositionally biased region" description="Basic and acidic residues" evidence="5">
    <location>
        <begin position="346"/>
        <end position="357"/>
    </location>
</feature>
<feature type="modified residue" description="N-acetylmethionine" evidence="2">
    <location>
        <position position="1"/>
    </location>
</feature>
<feature type="modified residue" description="Phosphoserine" evidence="2">
    <location>
        <position position="135"/>
    </location>
</feature>
<proteinExistence type="evidence at transcript level"/>
<accession>Q5R5B0</accession>
<evidence type="ECO:0000250" key="1"/>
<evidence type="ECO:0000250" key="2">
    <source>
        <dbReference type="UniProtKB" id="Q15011"/>
    </source>
</evidence>
<evidence type="ECO:0000255" key="3"/>
<evidence type="ECO:0000255" key="4">
    <source>
        <dbReference type="PROSITE-ProRule" id="PRU00214"/>
    </source>
</evidence>
<evidence type="ECO:0000256" key="5">
    <source>
        <dbReference type="SAM" id="MobiDB-lite"/>
    </source>
</evidence>
<dbReference type="EMBL" id="CR858911">
    <property type="protein sequence ID" value="CAH91109.1"/>
    <property type="molecule type" value="mRNA"/>
</dbReference>
<dbReference type="EMBL" id="CR860953">
    <property type="protein sequence ID" value="CAH93056.1"/>
    <property type="molecule type" value="mRNA"/>
</dbReference>
<dbReference type="RefSeq" id="NP_001125648.1">
    <property type="nucleotide sequence ID" value="NM_001132176.2"/>
</dbReference>
<dbReference type="SMR" id="Q5R5B0"/>
<dbReference type="FunCoup" id="Q5R5B0">
    <property type="interactions" value="1086"/>
</dbReference>
<dbReference type="STRING" id="9601.ENSPPYP00000008334"/>
<dbReference type="GeneID" id="100172567"/>
<dbReference type="KEGG" id="pon:100172567"/>
<dbReference type="CTD" id="9709"/>
<dbReference type="eggNOG" id="KOG4583">
    <property type="taxonomic scope" value="Eukaryota"/>
</dbReference>
<dbReference type="HOGENOM" id="CLU_058243_0_0_1"/>
<dbReference type="InParanoid" id="Q5R5B0"/>
<dbReference type="OrthoDB" id="21589at2759"/>
<dbReference type="TreeFam" id="TF324319"/>
<dbReference type="Proteomes" id="UP000001595">
    <property type="component" value="Chromosome 16"/>
</dbReference>
<dbReference type="GO" id="GO:0005789">
    <property type="term" value="C:endoplasmic reticulum membrane"/>
    <property type="evidence" value="ECO:0007669"/>
    <property type="project" value="UniProtKB-SubCell"/>
</dbReference>
<dbReference type="GO" id="GO:0044325">
    <property type="term" value="F:transmembrane transporter binding"/>
    <property type="evidence" value="ECO:0007669"/>
    <property type="project" value="TreeGrafter"/>
</dbReference>
<dbReference type="GO" id="GO:0032469">
    <property type="term" value="P:endoplasmic reticulum calcium ion homeostasis"/>
    <property type="evidence" value="ECO:0007669"/>
    <property type="project" value="TreeGrafter"/>
</dbReference>
<dbReference type="GO" id="GO:0030968">
    <property type="term" value="P:endoplasmic reticulum unfolded protein response"/>
    <property type="evidence" value="ECO:0007669"/>
    <property type="project" value="TreeGrafter"/>
</dbReference>
<dbReference type="GO" id="GO:1902236">
    <property type="term" value="P:negative regulation of endoplasmic reticulum stress-induced intrinsic apoptotic signaling pathway"/>
    <property type="evidence" value="ECO:0007669"/>
    <property type="project" value="TreeGrafter"/>
</dbReference>
<dbReference type="GO" id="GO:1904294">
    <property type="term" value="P:positive regulation of ERAD pathway"/>
    <property type="evidence" value="ECO:0000250"/>
    <property type="project" value="UniProtKB"/>
</dbReference>
<dbReference type="GO" id="GO:0006511">
    <property type="term" value="P:ubiquitin-dependent protein catabolic process"/>
    <property type="evidence" value="ECO:0007669"/>
    <property type="project" value="TreeGrafter"/>
</dbReference>
<dbReference type="CDD" id="cd17118">
    <property type="entry name" value="Ubl_HERP1"/>
    <property type="match status" value="1"/>
</dbReference>
<dbReference type="FunFam" id="3.10.20.90:FF:000046">
    <property type="entry name" value="Homocysteine-responsive endoplasmic reticulum-resident ubiquitin-like domain member 2 protein"/>
    <property type="match status" value="1"/>
</dbReference>
<dbReference type="Gene3D" id="3.10.20.90">
    <property type="entry name" value="Phosphatidylinositol 3-kinase Catalytic Subunit, Chain A, domain 1"/>
    <property type="match status" value="1"/>
</dbReference>
<dbReference type="InterPro" id="IPR039751">
    <property type="entry name" value="HERPUD1/2"/>
</dbReference>
<dbReference type="InterPro" id="IPR000626">
    <property type="entry name" value="Ubiquitin-like_dom"/>
</dbReference>
<dbReference type="InterPro" id="IPR029071">
    <property type="entry name" value="Ubiquitin-like_domsf"/>
</dbReference>
<dbReference type="PANTHER" id="PTHR12943:SF7">
    <property type="entry name" value="HOMOCYSTEINE-RESPONSIVE ENDOPLASMIC RETICULUM-RESIDENT UBIQUITIN-LIKE DOMAIN MEMBER 1 PROTEIN"/>
    <property type="match status" value="1"/>
</dbReference>
<dbReference type="PANTHER" id="PTHR12943">
    <property type="entry name" value="HOMOCYSTEINE-RESPONSIVE ENDOPLASMIC RETICULUM-RESIDENT UNIQUITIN-LIKE DOMAIN HERPUD PROTEIN FAMILY MEMBER"/>
    <property type="match status" value="1"/>
</dbReference>
<dbReference type="Pfam" id="PF00240">
    <property type="entry name" value="ubiquitin"/>
    <property type="match status" value="1"/>
</dbReference>
<dbReference type="SMART" id="SM00213">
    <property type="entry name" value="UBQ"/>
    <property type="match status" value="1"/>
</dbReference>
<dbReference type="SUPFAM" id="SSF54236">
    <property type="entry name" value="Ubiquitin-like"/>
    <property type="match status" value="1"/>
</dbReference>
<dbReference type="PROSITE" id="PS50053">
    <property type="entry name" value="UBIQUITIN_2"/>
    <property type="match status" value="1"/>
</dbReference>
<reference key="1">
    <citation type="submission" date="2004-11" db="EMBL/GenBank/DDBJ databases">
        <authorList>
            <consortium name="The German cDNA consortium"/>
        </authorList>
    </citation>
    <scope>NUCLEOTIDE SEQUENCE [LARGE SCALE MRNA]</scope>
    <source>
        <tissue>Heart</tissue>
        <tissue>Liver</tissue>
    </source>
</reference>
<gene>
    <name type="primary">HERPUD1</name>
</gene>